<organism>
    <name type="scientific">Escherichia coli O157:H7</name>
    <dbReference type="NCBI Taxonomy" id="83334"/>
    <lineage>
        <taxon>Bacteria</taxon>
        <taxon>Pseudomonadati</taxon>
        <taxon>Pseudomonadota</taxon>
        <taxon>Gammaproteobacteria</taxon>
        <taxon>Enterobacterales</taxon>
        <taxon>Enterobacteriaceae</taxon>
        <taxon>Escherichia</taxon>
    </lineage>
</organism>
<keyword id="KW-0489">Methyltransferase</keyword>
<keyword id="KW-1185">Reference proteome</keyword>
<keyword id="KW-0694">RNA-binding</keyword>
<keyword id="KW-0949">S-adenosyl-L-methionine</keyword>
<keyword id="KW-0808">Transferase</keyword>
<keyword id="KW-0819">tRNA processing</keyword>
<keyword id="KW-0820">tRNA-binding</keyword>
<proteinExistence type="inferred from homology"/>
<sequence length="229" mass="25343">MNPTRYARICEMLARRQPDLTVCMEQVHKPHNVSAIIRTADAVGVHEVHAVWPGSRMRTMASAAAGSNSWVQVKTHRTIGDAVAHLKGQGMQILATHLSDNAVDFREIDYTRPTCILMGQEKTGITQEALALADQDIIIPMIGMVQSLNVSVASALILYEAQRQRQNAGMYLRENSMLPEAEQQRLLFEGGYPVLAKVAKRKGLPYPHVNQQGEIEADADWWATMQAAG</sequence>
<accession>P0AGJ3</accession>
<accession>P19396</accession>
<dbReference type="EC" id="2.1.1.34" evidence="1"/>
<dbReference type="EMBL" id="AE005174">
    <property type="protein sequence ID" value="AAG58795.1"/>
    <property type="molecule type" value="Genomic_DNA"/>
</dbReference>
<dbReference type="EMBL" id="BA000007">
    <property type="protein sequence ID" value="BAB37949.2"/>
    <property type="status" value="ALT_INIT"/>
    <property type="molecule type" value="Genomic_DNA"/>
</dbReference>
<dbReference type="PIR" id="F91194">
    <property type="entry name" value="F91194"/>
</dbReference>
<dbReference type="PIR" id="G86041">
    <property type="entry name" value="G86041"/>
</dbReference>
<dbReference type="RefSeq" id="NP_312553.1">
    <property type="nucleotide sequence ID" value="NC_002695.1"/>
</dbReference>
<dbReference type="RefSeq" id="WP_001070177.1">
    <property type="nucleotide sequence ID" value="NZ_VOAI01000021.1"/>
</dbReference>
<dbReference type="SMR" id="P0AGJ3"/>
<dbReference type="STRING" id="155864.Z5077"/>
<dbReference type="GeneID" id="915517"/>
<dbReference type="GeneID" id="93778366"/>
<dbReference type="KEGG" id="ece:Z5077"/>
<dbReference type="KEGG" id="ecs:ECs_4526"/>
<dbReference type="PATRIC" id="fig|386585.9.peg.4744"/>
<dbReference type="eggNOG" id="COG0566">
    <property type="taxonomic scope" value="Bacteria"/>
</dbReference>
<dbReference type="HOGENOM" id="CLU_021322_4_2_6"/>
<dbReference type="OMA" id="KIPMVGF"/>
<dbReference type="Proteomes" id="UP000000558">
    <property type="component" value="Chromosome"/>
</dbReference>
<dbReference type="Proteomes" id="UP000002519">
    <property type="component" value="Chromosome"/>
</dbReference>
<dbReference type="GO" id="GO:0141100">
    <property type="term" value="F:tRNA (guanine(18)-2'-O)-methyltransferase activity"/>
    <property type="evidence" value="ECO:0007669"/>
    <property type="project" value="UniProtKB-UniRule"/>
</dbReference>
<dbReference type="GO" id="GO:0000049">
    <property type="term" value="F:tRNA binding"/>
    <property type="evidence" value="ECO:0007669"/>
    <property type="project" value="UniProtKB-UniRule"/>
</dbReference>
<dbReference type="GO" id="GO:0002938">
    <property type="term" value="P:tRNA guanine ribose methylation"/>
    <property type="evidence" value="ECO:0007669"/>
    <property type="project" value="UniProtKB-UniRule"/>
</dbReference>
<dbReference type="CDD" id="cd18092">
    <property type="entry name" value="SpoU-like_TrmH"/>
    <property type="match status" value="1"/>
</dbReference>
<dbReference type="FunFam" id="3.40.1280.10:FF:000009">
    <property type="entry name" value="tRNA (guanosine(18)-2'-O)-methyltransferase"/>
    <property type="match status" value="1"/>
</dbReference>
<dbReference type="Gene3D" id="3.40.1280.10">
    <property type="match status" value="1"/>
</dbReference>
<dbReference type="HAMAP" id="MF_02060">
    <property type="entry name" value="tRNA_methyltr_TrmH"/>
    <property type="match status" value="1"/>
</dbReference>
<dbReference type="InterPro" id="IPR029028">
    <property type="entry name" value="Alpha/beta_knot_MTases"/>
</dbReference>
<dbReference type="InterPro" id="IPR022724">
    <property type="entry name" value="rRNA_MeTrfase_SpoU_C"/>
</dbReference>
<dbReference type="InterPro" id="IPR001537">
    <property type="entry name" value="SpoU_MeTrfase"/>
</dbReference>
<dbReference type="InterPro" id="IPR033671">
    <property type="entry name" value="TrmH"/>
</dbReference>
<dbReference type="InterPro" id="IPR029026">
    <property type="entry name" value="tRNA_m1G_MTases_N"/>
</dbReference>
<dbReference type="NCBIfam" id="NF008295">
    <property type="entry name" value="PRK11081.1"/>
    <property type="match status" value="1"/>
</dbReference>
<dbReference type="PANTHER" id="PTHR43453">
    <property type="entry name" value="RRNA METHYLASE-LIKE"/>
    <property type="match status" value="1"/>
</dbReference>
<dbReference type="PANTHER" id="PTHR43453:SF1">
    <property type="entry name" value="TRNA_RRNA METHYLTRANSFERASE SPOU TYPE DOMAIN-CONTAINING PROTEIN"/>
    <property type="match status" value="1"/>
</dbReference>
<dbReference type="Pfam" id="PF12105">
    <property type="entry name" value="SpoU_methylas_C"/>
    <property type="match status" value="1"/>
</dbReference>
<dbReference type="Pfam" id="PF00588">
    <property type="entry name" value="SpoU_methylase"/>
    <property type="match status" value="1"/>
</dbReference>
<dbReference type="SUPFAM" id="SSF75217">
    <property type="entry name" value="alpha/beta knot"/>
    <property type="match status" value="1"/>
</dbReference>
<evidence type="ECO:0000255" key="1">
    <source>
        <dbReference type="HAMAP-Rule" id="MF_02060"/>
    </source>
</evidence>
<evidence type="ECO:0000305" key="2"/>
<comment type="function">
    <text evidence="1">Catalyzes the 2'-O methylation of guanosine at position 18 in tRNA.</text>
</comment>
<comment type="catalytic activity">
    <reaction evidence="1">
        <text>guanosine(18) in tRNA + S-adenosyl-L-methionine = 2'-O-methylguanosine(18) in tRNA + S-adenosyl-L-homocysteine + H(+)</text>
        <dbReference type="Rhea" id="RHEA:20077"/>
        <dbReference type="Rhea" id="RHEA-COMP:10190"/>
        <dbReference type="Rhea" id="RHEA-COMP:10192"/>
        <dbReference type="ChEBI" id="CHEBI:15378"/>
        <dbReference type="ChEBI" id="CHEBI:57856"/>
        <dbReference type="ChEBI" id="CHEBI:59789"/>
        <dbReference type="ChEBI" id="CHEBI:74269"/>
        <dbReference type="ChEBI" id="CHEBI:74445"/>
        <dbReference type="EC" id="2.1.1.34"/>
    </reaction>
</comment>
<comment type="similarity">
    <text evidence="1">Belongs to the class IV-like SAM-binding methyltransferase superfamily. RNA methyltransferase TrmH family.</text>
</comment>
<comment type="sequence caution" evidence="2">
    <conflict type="erroneous initiation">
        <sequence resource="EMBL-CDS" id="BAB37949"/>
    </conflict>
    <text>Truncated N-terminus.</text>
</comment>
<reference key="1">
    <citation type="journal article" date="2001" name="Nature">
        <title>Genome sequence of enterohaemorrhagic Escherichia coli O157:H7.</title>
        <authorList>
            <person name="Perna N.T."/>
            <person name="Plunkett G. III"/>
            <person name="Burland V."/>
            <person name="Mau B."/>
            <person name="Glasner J.D."/>
            <person name="Rose D.J."/>
            <person name="Mayhew G.F."/>
            <person name="Evans P.S."/>
            <person name="Gregor J."/>
            <person name="Kirkpatrick H.A."/>
            <person name="Posfai G."/>
            <person name="Hackett J."/>
            <person name="Klink S."/>
            <person name="Boutin A."/>
            <person name="Shao Y."/>
            <person name="Miller L."/>
            <person name="Grotbeck E.J."/>
            <person name="Davis N.W."/>
            <person name="Lim A."/>
            <person name="Dimalanta E.T."/>
            <person name="Potamousis K."/>
            <person name="Apodaca J."/>
            <person name="Anantharaman T.S."/>
            <person name="Lin J."/>
            <person name="Yen G."/>
            <person name="Schwartz D.C."/>
            <person name="Welch R.A."/>
            <person name="Blattner F.R."/>
        </authorList>
    </citation>
    <scope>NUCLEOTIDE SEQUENCE [LARGE SCALE GENOMIC DNA]</scope>
    <source>
        <strain>O157:H7 / EDL933 / ATCC 700927 / EHEC</strain>
    </source>
</reference>
<reference key="2">
    <citation type="journal article" date="2001" name="DNA Res.">
        <title>Complete genome sequence of enterohemorrhagic Escherichia coli O157:H7 and genomic comparison with a laboratory strain K-12.</title>
        <authorList>
            <person name="Hayashi T."/>
            <person name="Makino K."/>
            <person name="Ohnishi M."/>
            <person name="Kurokawa K."/>
            <person name="Ishii K."/>
            <person name="Yokoyama K."/>
            <person name="Han C.-G."/>
            <person name="Ohtsubo E."/>
            <person name="Nakayama K."/>
            <person name="Murata T."/>
            <person name="Tanaka M."/>
            <person name="Tobe T."/>
            <person name="Iida T."/>
            <person name="Takami H."/>
            <person name="Honda T."/>
            <person name="Sasakawa C."/>
            <person name="Ogasawara N."/>
            <person name="Yasunaga T."/>
            <person name="Kuhara S."/>
            <person name="Shiba T."/>
            <person name="Hattori M."/>
            <person name="Shinagawa H."/>
        </authorList>
    </citation>
    <scope>NUCLEOTIDE SEQUENCE [LARGE SCALE GENOMIC DNA]</scope>
    <source>
        <strain>O157:H7 / Sakai / RIMD 0509952 / EHEC</strain>
    </source>
</reference>
<feature type="chain" id="PRO_0000159773" description="tRNA (guanosine(18)-2'-O)-methyltransferase">
    <location>
        <begin position="1"/>
        <end position="229"/>
    </location>
</feature>
<feature type="binding site" evidence="1">
    <location>
        <position position="96"/>
    </location>
    <ligand>
        <name>S-adenosyl-L-methionine</name>
        <dbReference type="ChEBI" id="CHEBI:59789"/>
    </ligand>
</feature>
<feature type="binding site" evidence="1">
    <location>
        <position position="139"/>
    </location>
    <ligand>
        <name>S-adenosyl-L-methionine</name>
        <dbReference type="ChEBI" id="CHEBI:59789"/>
    </ligand>
</feature>
<feature type="binding site" evidence="1">
    <location>
        <position position="148"/>
    </location>
    <ligand>
        <name>S-adenosyl-L-methionine</name>
        <dbReference type="ChEBI" id="CHEBI:59789"/>
    </ligand>
</feature>
<protein>
    <recommendedName>
        <fullName evidence="1">tRNA (guanosine(18)-2'-O)-methyltransferase</fullName>
        <ecNumber evidence="1">2.1.1.34</ecNumber>
    </recommendedName>
    <alternativeName>
        <fullName evidence="1">tRNA [Gm18] methyltransferase</fullName>
    </alternativeName>
</protein>
<name>TRMH_ECO57</name>
<gene>
    <name evidence="1" type="primary">trmH</name>
    <name type="synonym">spoU</name>
    <name type="ordered locus">Z5077</name>
    <name type="ordered locus">ECs4526</name>
</gene>